<evidence type="ECO:0000255" key="1">
    <source>
        <dbReference type="HAMAP-Rule" id="MF_01964"/>
    </source>
</evidence>
<dbReference type="EC" id="1.1.1.205" evidence="1"/>
<dbReference type="EMBL" id="CP000866">
    <property type="protein sequence ID" value="ABX13465.1"/>
    <property type="molecule type" value="Genomic_DNA"/>
</dbReference>
<dbReference type="RefSeq" id="WP_012215952.1">
    <property type="nucleotide sequence ID" value="NC_010085.1"/>
</dbReference>
<dbReference type="SMR" id="A9A5Y7"/>
<dbReference type="STRING" id="436308.Nmar_1569"/>
<dbReference type="EnsemblBacteria" id="ABX13465">
    <property type="protein sequence ID" value="ABX13465"/>
    <property type="gene ID" value="Nmar_1569"/>
</dbReference>
<dbReference type="GeneID" id="5772999"/>
<dbReference type="KEGG" id="nmr:Nmar_1569"/>
<dbReference type="eggNOG" id="arCOG00612">
    <property type="taxonomic scope" value="Archaea"/>
</dbReference>
<dbReference type="HOGENOM" id="CLU_022552_0_1_2"/>
<dbReference type="InParanoid" id="A9A5Y7"/>
<dbReference type="OrthoDB" id="21361at2157"/>
<dbReference type="PhylomeDB" id="A9A5Y7"/>
<dbReference type="UniPathway" id="UPA00601">
    <property type="reaction ID" value="UER00295"/>
</dbReference>
<dbReference type="Proteomes" id="UP000000792">
    <property type="component" value="Chromosome"/>
</dbReference>
<dbReference type="GO" id="GO:0003938">
    <property type="term" value="F:IMP dehydrogenase activity"/>
    <property type="evidence" value="ECO:0000318"/>
    <property type="project" value="GO_Central"/>
</dbReference>
<dbReference type="GO" id="GO:0046872">
    <property type="term" value="F:metal ion binding"/>
    <property type="evidence" value="ECO:0007669"/>
    <property type="project" value="UniProtKB-UniRule"/>
</dbReference>
<dbReference type="GO" id="GO:0000166">
    <property type="term" value="F:nucleotide binding"/>
    <property type="evidence" value="ECO:0007669"/>
    <property type="project" value="UniProtKB-UniRule"/>
</dbReference>
<dbReference type="GO" id="GO:0006177">
    <property type="term" value="P:GMP biosynthetic process"/>
    <property type="evidence" value="ECO:0007669"/>
    <property type="project" value="UniProtKB-UniRule"/>
</dbReference>
<dbReference type="GO" id="GO:0006183">
    <property type="term" value="P:GTP biosynthetic process"/>
    <property type="evidence" value="ECO:0000318"/>
    <property type="project" value="GO_Central"/>
</dbReference>
<dbReference type="CDD" id="cd04601">
    <property type="entry name" value="CBS_pair_IMPDH"/>
    <property type="match status" value="1"/>
</dbReference>
<dbReference type="CDD" id="cd00381">
    <property type="entry name" value="IMPDH"/>
    <property type="match status" value="1"/>
</dbReference>
<dbReference type="FunFam" id="3.20.20.70:FF:000003">
    <property type="entry name" value="GMP reductase"/>
    <property type="match status" value="1"/>
</dbReference>
<dbReference type="Gene3D" id="3.20.20.70">
    <property type="entry name" value="Aldolase class I"/>
    <property type="match status" value="1"/>
</dbReference>
<dbReference type="HAMAP" id="MF_01964">
    <property type="entry name" value="IMPDH"/>
    <property type="match status" value="1"/>
</dbReference>
<dbReference type="InterPro" id="IPR013785">
    <property type="entry name" value="Aldolase_TIM"/>
</dbReference>
<dbReference type="InterPro" id="IPR000644">
    <property type="entry name" value="CBS_dom"/>
</dbReference>
<dbReference type="InterPro" id="IPR046342">
    <property type="entry name" value="CBS_dom_sf"/>
</dbReference>
<dbReference type="InterPro" id="IPR005990">
    <property type="entry name" value="IMP_DH"/>
</dbReference>
<dbReference type="InterPro" id="IPR015875">
    <property type="entry name" value="IMP_DH/GMP_Rdtase_CS"/>
</dbReference>
<dbReference type="InterPro" id="IPR001093">
    <property type="entry name" value="IMP_DH_GMPRt"/>
</dbReference>
<dbReference type="NCBIfam" id="TIGR01302">
    <property type="entry name" value="IMP_dehydrog"/>
    <property type="match status" value="1"/>
</dbReference>
<dbReference type="PANTHER" id="PTHR11911:SF111">
    <property type="entry name" value="INOSINE-5'-MONOPHOSPHATE DEHYDROGENASE"/>
    <property type="match status" value="1"/>
</dbReference>
<dbReference type="PANTHER" id="PTHR11911">
    <property type="entry name" value="INOSINE-5-MONOPHOSPHATE DEHYDROGENASE RELATED"/>
    <property type="match status" value="1"/>
</dbReference>
<dbReference type="Pfam" id="PF00571">
    <property type="entry name" value="CBS"/>
    <property type="match status" value="2"/>
</dbReference>
<dbReference type="Pfam" id="PF00478">
    <property type="entry name" value="IMPDH"/>
    <property type="match status" value="1"/>
</dbReference>
<dbReference type="PIRSF" id="PIRSF000130">
    <property type="entry name" value="IMPDH"/>
    <property type="match status" value="1"/>
</dbReference>
<dbReference type="SMART" id="SM00116">
    <property type="entry name" value="CBS"/>
    <property type="match status" value="2"/>
</dbReference>
<dbReference type="SMART" id="SM01240">
    <property type="entry name" value="IMPDH"/>
    <property type="match status" value="1"/>
</dbReference>
<dbReference type="SUPFAM" id="SSF54631">
    <property type="entry name" value="CBS-domain pair"/>
    <property type="match status" value="1"/>
</dbReference>
<dbReference type="SUPFAM" id="SSF51412">
    <property type="entry name" value="Inosine monophosphate dehydrogenase (IMPDH)"/>
    <property type="match status" value="1"/>
</dbReference>
<dbReference type="PROSITE" id="PS51371">
    <property type="entry name" value="CBS"/>
    <property type="match status" value="2"/>
</dbReference>
<dbReference type="PROSITE" id="PS00487">
    <property type="entry name" value="IMP_DH_GMP_RED"/>
    <property type="match status" value="1"/>
</dbReference>
<accession>A9A5Y7</accession>
<proteinExistence type="inferred from homology"/>
<name>IMDH_NITMS</name>
<keyword id="KW-0129">CBS domain</keyword>
<keyword id="KW-0332">GMP biosynthesis</keyword>
<keyword id="KW-0479">Metal-binding</keyword>
<keyword id="KW-0520">NAD</keyword>
<keyword id="KW-0560">Oxidoreductase</keyword>
<keyword id="KW-0630">Potassium</keyword>
<keyword id="KW-0658">Purine biosynthesis</keyword>
<keyword id="KW-1185">Reference proteome</keyword>
<keyword id="KW-0677">Repeat</keyword>
<organism>
    <name type="scientific">Nitrosopumilus maritimus (strain SCM1)</name>
    <dbReference type="NCBI Taxonomy" id="436308"/>
    <lineage>
        <taxon>Archaea</taxon>
        <taxon>Nitrososphaerota</taxon>
        <taxon>Nitrososphaeria</taxon>
        <taxon>Nitrosopumilales</taxon>
        <taxon>Nitrosopumilaceae</taxon>
        <taxon>Nitrosopumilus</taxon>
    </lineage>
</organism>
<protein>
    <recommendedName>
        <fullName evidence="1">Inosine-5'-monophosphate dehydrogenase</fullName>
        <shortName evidence="1">IMP dehydrogenase</shortName>
        <shortName evidence="1">IMPD</shortName>
        <shortName evidence="1">IMPDH</shortName>
        <ecNumber evidence="1">1.1.1.205</ecNumber>
    </recommendedName>
</protein>
<sequence>MEFKEGLTFDDVLLVPKYSDITSRSQTDLTTKLSRNITINIPFVSANMDTVTESSMAVAMARAGGIGIIHRFLTIQEQANEVLKVKRSGSVMIENPYSISSDKSIQDALDYAEDKEISGLLVVDSNSKLVGIVTERDLLFAGSNGTIADVMTKDVVTAKPGVSLDEAKDILHKHRIEKLPIVDDSGIIQGLITSKDITNNTDYPNASKDKKGRPLVGAAVGVKGDFLERSESLLNAGADVLVVDIAHGHSENAISTVRNIKKAFPDCELIAGNIATAQGAEDLIKAGVDAVKVGVGSGSICITRVITGSGVPQLTAVMDCAKIGNDHGIPIISDGGTRTSGDATKALAAGASSVMVGSMLGGTDESPGTVLTKNGKRFKVYRGMASLAASIGRKSKETGSISLEDDLNDYVAEGVEAMVPYKGTVTDILKQLAGGVRSGLSYCGAHTIPQMQQNAEFIKMSRAGFAESQPHDVLLM</sequence>
<feature type="chain" id="PRO_0000415694" description="Inosine-5'-monophosphate dehydrogenase">
    <location>
        <begin position="1"/>
        <end position="476"/>
    </location>
</feature>
<feature type="domain" description="CBS 1" evidence="1">
    <location>
        <begin position="92"/>
        <end position="150"/>
    </location>
</feature>
<feature type="domain" description="CBS 2" evidence="1">
    <location>
        <begin position="151"/>
        <end position="207"/>
    </location>
</feature>
<feature type="active site" description="Thioimidate intermediate" evidence="1">
    <location>
        <position position="301"/>
    </location>
</feature>
<feature type="binding site" evidence="1">
    <location>
        <position position="244"/>
    </location>
    <ligand>
        <name>NAD(+)</name>
        <dbReference type="ChEBI" id="CHEBI:57540"/>
    </ligand>
</feature>
<feature type="binding site" evidence="1">
    <location>
        <begin position="294"/>
        <end position="296"/>
    </location>
    <ligand>
        <name>NAD(+)</name>
        <dbReference type="ChEBI" id="CHEBI:57540"/>
    </ligand>
</feature>
<feature type="binding site" description="in other chain" evidence="1">
    <location>
        <position position="296"/>
    </location>
    <ligand>
        <name>K(+)</name>
        <dbReference type="ChEBI" id="CHEBI:29103"/>
        <note>ligand shared between two tetrameric partners</note>
    </ligand>
</feature>
<feature type="binding site" description="in other chain" evidence="1">
    <location>
        <position position="298"/>
    </location>
    <ligand>
        <name>K(+)</name>
        <dbReference type="ChEBI" id="CHEBI:29103"/>
        <note>ligand shared between two tetrameric partners</note>
    </ligand>
</feature>
<feature type="binding site" evidence="1">
    <location>
        <position position="299"/>
    </location>
    <ligand>
        <name>IMP</name>
        <dbReference type="ChEBI" id="CHEBI:58053"/>
    </ligand>
</feature>
<feature type="binding site" description="in other chain" evidence="1">
    <location>
        <position position="301"/>
    </location>
    <ligand>
        <name>K(+)</name>
        <dbReference type="ChEBI" id="CHEBI:29103"/>
        <note>ligand shared between two tetrameric partners</note>
    </ligand>
</feature>
<feature type="binding site" evidence="1">
    <location>
        <begin position="334"/>
        <end position="336"/>
    </location>
    <ligand>
        <name>IMP</name>
        <dbReference type="ChEBI" id="CHEBI:58053"/>
    </ligand>
</feature>
<feature type="binding site" evidence="1">
    <location>
        <begin position="357"/>
        <end position="358"/>
    </location>
    <ligand>
        <name>IMP</name>
        <dbReference type="ChEBI" id="CHEBI:58053"/>
    </ligand>
</feature>
<feature type="binding site" evidence="1">
    <location>
        <begin position="381"/>
        <end position="385"/>
    </location>
    <ligand>
        <name>IMP</name>
        <dbReference type="ChEBI" id="CHEBI:58053"/>
    </ligand>
</feature>
<feature type="binding site" evidence="1">
    <location>
        <position position="413"/>
    </location>
    <ligand>
        <name>IMP</name>
        <dbReference type="ChEBI" id="CHEBI:58053"/>
    </ligand>
</feature>
<feature type="binding site" evidence="1">
    <location>
        <position position="467"/>
    </location>
    <ligand>
        <name>K(+)</name>
        <dbReference type="ChEBI" id="CHEBI:29103"/>
        <note>ligand shared between two tetrameric partners</note>
    </ligand>
</feature>
<feature type="binding site" evidence="1">
    <location>
        <position position="468"/>
    </location>
    <ligand>
        <name>K(+)</name>
        <dbReference type="ChEBI" id="CHEBI:29103"/>
        <note>ligand shared between two tetrameric partners</note>
    </ligand>
</feature>
<comment type="function">
    <text evidence="1">Catalyzes the conversion of inosine 5'-phosphate (IMP) to xanthosine 5'-phosphate (XMP), the first committed and rate-limiting step in the de novo synthesis of guanine nucleotides, and therefore plays an important role in the regulation of cell growth.</text>
</comment>
<comment type="catalytic activity">
    <reaction evidence="1">
        <text>IMP + NAD(+) + H2O = XMP + NADH + H(+)</text>
        <dbReference type="Rhea" id="RHEA:11708"/>
        <dbReference type="ChEBI" id="CHEBI:15377"/>
        <dbReference type="ChEBI" id="CHEBI:15378"/>
        <dbReference type="ChEBI" id="CHEBI:57464"/>
        <dbReference type="ChEBI" id="CHEBI:57540"/>
        <dbReference type="ChEBI" id="CHEBI:57945"/>
        <dbReference type="ChEBI" id="CHEBI:58053"/>
        <dbReference type="EC" id="1.1.1.205"/>
    </reaction>
</comment>
<comment type="cofactor">
    <cofactor evidence="1">
        <name>K(+)</name>
        <dbReference type="ChEBI" id="CHEBI:29103"/>
    </cofactor>
</comment>
<comment type="activity regulation">
    <text evidence="1">Mycophenolic acid (MPA) is a non-competitive inhibitor that prevents formation of the closed enzyme conformation by binding to the same site as the amobile flap. In contrast, mizoribine monophosphate (MZP) is a competitive inhibitor that induces the closed conformation. MPA is a potent inhibitor of mammalian IMPDHs but a poor inhibitor of the bacterial enzymes. MZP is a more potent inhibitor of bacterial IMPDH.</text>
</comment>
<comment type="pathway">
    <text evidence="1">Purine metabolism; XMP biosynthesis via de novo pathway; XMP from IMP: step 1/1.</text>
</comment>
<comment type="subunit">
    <text evidence="1">Homotetramer.</text>
</comment>
<comment type="similarity">
    <text evidence="1">Belongs to the IMPDH/GMPR family.</text>
</comment>
<gene>
    <name evidence="1" type="primary">guaB</name>
    <name type="ordered locus">Nmar_1569</name>
</gene>
<reference key="1">
    <citation type="journal article" date="2010" name="Proc. Natl. Acad. Sci. U.S.A.">
        <title>Nitrosopumilus maritimus genome reveals unique mechanisms for nitrification and autotrophy in globally distributed marine crenarchaea.</title>
        <authorList>
            <person name="Walker C.B."/>
            <person name="de la Torre J.R."/>
            <person name="Klotz M.G."/>
            <person name="Urakawa H."/>
            <person name="Pinel N."/>
            <person name="Arp D.J."/>
            <person name="Brochier-Armanet C."/>
            <person name="Chain P.S."/>
            <person name="Chan P.P."/>
            <person name="Gollabgir A."/>
            <person name="Hemp J."/>
            <person name="Hugler M."/>
            <person name="Karr E.A."/>
            <person name="Konneke M."/>
            <person name="Shin M."/>
            <person name="Lawton T.J."/>
            <person name="Lowe T."/>
            <person name="Martens-Habbena W."/>
            <person name="Sayavedra-Soto L.A."/>
            <person name="Lang D."/>
            <person name="Sievert S.M."/>
            <person name="Rosenzweig A.C."/>
            <person name="Manning G."/>
            <person name="Stahl D.A."/>
        </authorList>
    </citation>
    <scope>NUCLEOTIDE SEQUENCE [LARGE SCALE GENOMIC DNA]</scope>
    <source>
        <strain>SCM1</strain>
    </source>
</reference>